<accession>B5R8V8</accession>
<evidence type="ECO:0000255" key="1">
    <source>
        <dbReference type="HAMAP-Rule" id="MF_00188"/>
    </source>
</evidence>
<sequence>MMRIALFLLTNLAVMVVFGLVLSLTGIQSSSVQGLLIMALLFGFGGSFISLLMSKWMALKSVGGEVIEQPRNERERWLMNTVATQARQAGIAMPQVAIYHAPDINAFATGARRDASLVAVSTGLLQNMSPDEAEAVIAHEISHIANGDMVTMTLIQGVVNTFVIFISRIIAQIAAGFLGGNRDEGEGSNGNPLIYFAVATVLELVFGILASIITMWFSRYREFHADAGSAKLVGREKMIAALQRLKTSYEPQEATSMMAFCINGKSKSLSELFMTHPPLDKRIEALRSGEYLK</sequence>
<name>HTPX_SALG2</name>
<reference key="1">
    <citation type="journal article" date="2008" name="Genome Res.">
        <title>Comparative genome analysis of Salmonella enteritidis PT4 and Salmonella gallinarum 287/91 provides insights into evolutionary and host adaptation pathways.</title>
        <authorList>
            <person name="Thomson N.R."/>
            <person name="Clayton D.J."/>
            <person name="Windhorst D."/>
            <person name="Vernikos G."/>
            <person name="Davidson S."/>
            <person name="Churcher C."/>
            <person name="Quail M.A."/>
            <person name="Stevens M."/>
            <person name="Jones M.A."/>
            <person name="Watson M."/>
            <person name="Barron A."/>
            <person name="Layton A."/>
            <person name="Pickard D."/>
            <person name="Kingsley R.A."/>
            <person name="Bignell A."/>
            <person name="Clark L."/>
            <person name="Harris B."/>
            <person name="Ormond D."/>
            <person name="Abdellah Z."/>
            <person name="Brooks K."/>
            <person name="Cherevach I."/>
            <person name="Chillingworth T."/>
            <person name="Woodward J."/>
            <person name="Norberczak H."/>
            <person name="Lord A."/>
            <person name="Arrowsmith C."/>
            <person name="Jagels K."/>
            <person name="Moule S."/>
            <person name="Mungall K."/>
            <person name="Saunders M."/>
            <person name="Whitehead S."/>
            <person name="Chabalgoity J.A."/>
            <person name="Maskell D."/>
            <person name="Humphreys T."/>
            <person name="Roberts M."/>
            <person name="Barrow P.A."/>
            <person name="Dougan G."/>
            <person name="Parkhill J."/>
        </authorList>
    </citation>
    <scope>NUCLEOTIDE SEQUENCE [LARGE SCALE GENOMIC DNA]</scope>
    <source>
        <strain>287/91 / NCTC 13346</strain>
    </source>
</reference>
<proteinExistence type="inferred from homology"/>
<gene>
    <name evidence="1" type="primary">htpX</name>
    <name type="ordered locus">SG1272</name>
</gene>
<keyword id="KW-0997">Cell inner membrane</keyword>
<keyword id="KW-1003">Cell membrane</keyword>
<keyword id="KW-0378">Hydrolase</keyword>
<keyword id="KW-0472">Membrane</keyword>
<keyword id="KW-0479">Metal-binding</keyword>
<keyword id="KW-0482">Metalloprotease</keyword>
<keyword id="KW-0645">Protease</keyword>
<keyword id="KW-0346">Stress response</keyword>
<keyword id="KW-0812">Transmembrane</keyword>
<keyword id="KW-1133">Transmembrane helix</keyword>
<keyword id="KW-0862">Zinc</keyword>
<feature type="chain" id="PRO_1000098842" description="Protease HtpX">
    <location>
        <begin position="1"/>
        <end position="293"/>
    </location>
</feature>
<feature type="transmembrane region" description="Helical" evidence="1">
    <location>
        <begin position="4"/>
        <end position="24"/>
    </location>
</feature>
<feature type="transmembrane region" description="Helical" evidence="1">
    <location>
        <begin position="34"/>
        <end position="54"/>
    </location>
</feature>
<feature type="transmembrane region" description="Helical" evidence="1">
    <location>
        <begin position="158"/>
        <end position="178"/>
    </location>
</feature>
<feature type="transmembrane region" description="Helical" evidence="1">
    <location>
        <begin position="193"/>
        <end position="213"/>
    </location>
</feature>
<feature type="active site" evidence="1">
    <location>
        <position position="140"/>
    </location>
</feature>
<feature type="binding site" evidence="1">
    <location>
        <position position="139"/>
    </location>
    <ligand>
        <name>Zn(2+)</name>
        <dbReference type="ChEBI" id="CHEBI:29105"/>
        <note>catalytic</note>
    </ligand>
</feature>
<feature type="binding site" evidence="1">
    <location>
        <position position="143"/>
    </location>
    <ligand>
        <name>Zn(2+)</name>
        <dbReference type="ChEBI" id="CHEBI:29105"/>
        <note>catalytic</note>
    </ligand>
</feature>
<feature type="binding site" evidence="1">
    <location>
        <position position="222"/>
    </location>
    <ligand>
        <name>Zn(2+)</name>
        <dbReference type="ChEBI" id="CHEBI:29105"/>
        <note>catalytic</note>
    </ligand>
</feature>
<protein>
    <recommendedName>
        <fullName evidence="1">Protease HtpX</fullName>
        <ecNumber evidence="1">3.4.24.-</ecNumber>
    </recommendedName>
    <alternativeName>
        <fullName evidence="1">Heat shock protein HtpX</fullName>
    </alternativeName>
</protein>
<organism>
    <name type="scientific">Salmonella gallinarum (strain 287/91 / NCTC 13346)</name>
    <dbReference type="NCBI Taxonomy" id="550538"/>
    <lineage>
        <taxon>Bacteria</taxon>
        <taxon>Pseudomonadati</taxon>
        <taxon>Pseudomonadota</taxon>
        <taxon>Gammaproteobacteria</taxon>
        <taxon>Enterobacterales</taxon>
        <taxon>Enterobacteriaceae</taxon>
        <taxon>Salmonella</taxon>
    </lineage>
</organism>
<dbReference type="EC" id="3.4.24.-" evidence="1"/>
<dbReference type="EMBL" id="AM933173">
    <property type="protein sequence ID" value="CAR37151.1"/>
    <property type="molecule type" value="Genomic_DNA"/>
</dbReference>
<dbReference type="RefSeq" id="WP_000984498.1">
    <property type="nucleotide sequence ID" value="NC_011274.1"/>
</dbReference>
<dbReference type="SMR" id="B5R8V8"/>
<dbReference type="MEROPS" id="M48.002"/>
<dbReference type="GeneID" id="66756319"/>
<dbReference type="KEGG" id="seg:SG1272"/>
<dbReference type="HOGENOM" id="CLU_042266_1_0_6"/>
<dbReference type="Proteomes" id="UP000008321">
    <property type="component" value="Chromosome"/>
</dbReference>
<dbReference type="GO" id="GO:0005886">
    <property type="term" value="C:plasma membrane"/>
    <property type="evidence" value="ECO:0007669"/>
    <property type="project" value="UniProtKB-SubCell"/>
</dbReference>
<dbReference type="GO" id="GO:0004222">
    <property type="term" value="F:metalloendopeptidase activity"/>
    <property type="evidence" value="ECO:0007669"/>
    <property type="project" value="UniProtKB-UniRule"/>
</dbReference>
<dbReference type="GO" id="GO:0008270">
    <property type="term" value="F:zinc ion binding"/>
    <property type="evidence" value="ECO:0007669"/>
    <property type="project" value="UniProtKB-UniRule"/>
</dbReference>
<dbReference type="GO" id="GO:0006508">
    <property type="term" value="P:proteolysis"/>
    <property type="evidence" value="ECO:0007669"/>
    <property type="project" value="UniProtKB-KW"/>
</dbReference>
<dbReference type="CDD" id="cd07335">
    <property type="entry name" value="M48B_HtpX_like"/>
    <property type="match status" value="1"/>
</dbReference>
<dbReference type="FunFam" id="3.30.2010.10:FF:000001">
    <property type="entry name" value="Protease HtpX"/>
    <property type="match status" value="1"/>
</dbReference>
<dbReference type="Gene3D" id="3.30.2010.10">
    <property type="entry name" value="Metalloproteases ('zincins'), catalytic domain"/>
    <property type="match status" value="1"/>
</dbReference>
<dbReference type="HAMAP" id="MF_00188">
    <property type="entry name" value="Pept_M48_protease_HtpX"/>
    <property type="match status" value="1"/>
</dbReference>
<dbReference type="InterPro" id="IPR050083">
    <property type="entry name" value="HtpX_protease"/>
</dbReference>
<dbReference type="InterPro" id="IPR022919">
    <property type="entry name" value="Pept_M48_protease_HtpX"/>
</dbReference>
<dbReference type="InterPro" id="IPR001915">
    <property type="entry name" value="Peptidase_M48"/>
</dbReference>
<dbReference type="NCBIfam" id="NF003965">
    <property type="entry name" value="PRK05457.1"/>
    <property type="match status" value="1"/>
</dbReference>
<dbReference type="PANTHER" id="PTHR43221">
    <property type="entry name" value="PROTEASE HTPX"/>
    <property type="match status" value="1"/>
</dbReference>
<dbReference type="PANTHER" id="PTHR43221:SF1">
    <property type="entry name" value="PROTEASE HTPX"/>
    <property type="match status" value="1"/>
</dbReference>
<dbReference type="Pfam" id="PF01435">
    <property type="entry name" value="Peptidase_M48"/>
    <property type="match status" value="1"/>
</dbReference>
<comment type="cofactor">
    <cofactor evidence="1">
        <name>Zn(2+)</name>
        <dbReference type="ChEBI" id="CHEBI:29105"/>
    </cofactor>
    <text evidence="1">Binds 1 zinc ion per subunit.</text>
</comment>
<comment type="subcellular location">
    <subcellularLocation>
        <location evidence="1">Cell inner membrane</location>
        <topology evidence="1">Multi-pass membrane protein</topology>
    </subcellularLocation>
</comment>
<comment type="similarity">
    <text evidence="1">Belongs to the peptidase M48B family.</text>
</comment>